<evidence type="ECO:0000255" key="1">
    <source>
        <dbReference type="HAMAP-Rule" id="MF_00211"/>
    </source>
</evidence>
<accession>Q31B38</accession>
<protein>
    <recommendedName>
        <fullName evidence="1">Anthranilate phosphoribosyltransferase</fullName>
        <ecNumber evidence="1">2.4.2.18</ecNumber>
    </recommendedName>
</protein>
<feature type="chain" id="PRO_1000043045" description="Anthranilate phosphoribosyltransferase">
    <location>
        <begin position="1"/>
        <end position="349"/>
    </location>
</feature>
<feature type="binding site" evidence="1">
    <location>
        <position position="86"/>
    </location>
    <ligand>
        <name>5-phospho-alpha-D-ribose 1-diphosphate</name>
        <dbReference type="ChEBI" id="CHEBI:58017"/>
    </ligand>
</feature>
<feature type="binding site" evidence="1">
    <location>
        <position position="86"/>
    </location>
    <ligand>
        <name>anthranilate</name>
        <dbReference type="ChEBI" id="CHEBI:16567"/>
        <label>1</label>
    </ligand>
</feature>
<feature type="binding site" evidence="1">
    <location>
        <begin position="89"/>
        <end position="90"/>
    </location>
    <ligand>
        <name>5-phospho-alpha-D-ribose 1-diphosphate</name>
        <dbReference type="ChEBI" id="CHEBI:58017"/>
    </ligand>
</feature>
<feature type="binding site" evidence="1">
    <location>
        <position position="94"/>
    </location>
    <ligand>
        <name>5-phospho-alpha-D-ribose 1-diphosphate</name>
        <dbReference type="ChEBI" id="CHEBI:58017"/>
    </ligand>
</feature>
<feature type="binding site" evidence="1">
    <location>
        <begin position="96"/>
        <end position="99"/>
    </location>
    <ligand>
        <name>5-phospho-alpha-D-ribose 1-diphosphate</name>
        <dbReference type="ChEBI" id="CHEBI:58017"/>
    </ligand>
</feature>
<feature type="binding site" evidence="1">
    <location>
        <position position="98"/>
    </location>
    <ligand>
        <name>Mg(2+)</name>
        <dbReference type="ChEBI" id="CHEBI:18420"/>
        <label>1</label>
    </ligand>
</feature>
<feature type="binding site" evidence="1">
    <location>
        <begin position="114"/>
        <end position="122"/>
    </location>
    <ligand>
        <name>5-phospho-alpha-D-ribose 1-diphosphate</name>
        <dbReference type="ChEBI" id="CHEBI:58017"/>
    </ligand>
</feature>
<feature type="binding site" evidence="1">
    <location>
        <position position="117"/>
    </location>
    <ligand>
        <name>anthranilate</name>
        <dbReference type="ChEBI" id="CHEBI:16567"/>
        <label>1</label>
    </ligand>
</feature>
<feature type="binding site" evidence="1">
    <location>
        <position position="126"/>
    </location>
    <ligand>
        <name>5-phospho-alpha-D-ribose 1-diphosphate</name>
        <dbReference type="ChEBI" id="CHEBI:58017"/>
    </ligand>
</feature>
<feature type="binding site" evidence="1">
    <location>
        <position position="172"/>
    </location>
    <ligand>
        <name>anthranilate</name>
        <dbReference type="ChEBI" id="CHEBI:16567"/>
        <label>2</label>
    </ligand>
</feature>
<feature type="binding site" evidence="1">
    <location>
        <position position="231"/>
    </location>
    <ligand>
        <name>Mg(2+)</name>
        <dbReference type="ChEBI" id="CHEBI:18420"/>
        <label>2</label>
    </ligand>
</feature>
<feature type="binding site" evidence="1">
    <location>
        <position position="232"/>
    </location>
    <ligand>
        <name>Mg(2+)</name>
        <dbReference type="ChEBI" id="CHEBI:18420"/>
        <label>1</label>
    </ligand>
</feature>
<feature type="binding site" evidence="1">
    <location>
        <position position="232"/>
    </location>
    <ligand>
        <name>Mg(2+)</name>
        <dbReference type="ChEBI" id="CHEBI:18420"/>
        <label>2</label>
    </ligand>
</feature>
<gene>
    <name evidence="1" type="primary">trpD</name>
    <name type="ordered locus">PMT9312_0847</name>
</gene>
<keyword id="KW-0028">Amino-acid biosynthesis</keyword>
<keyword id="KW-0057">Aromatic amino acid biosynthesis</keyword>
<keyword id="KW-0328">Glycosyltransferase</keyword>
<keyword id="KW-0460">Magnesium</keyword>
<keyword id="KW-0479">Metal-binding</keyword>
<keyword id="KW-0808">Transferase</keyword>
<keyword id="KW-0822">Tryptophan biosynthesis</keyword>
<dbReference type="EC" id="2.4.2.18" evidence="1"/>
<dbReference type="EMBL" id="CP000111">
    <property type="protein sequence ID" value="ABB49907.1"/>
    <property type="molecule type" value="Genomic_DNA"/>
</dbReference>
<dbReference type="RefSeq" id="WP_011376402.1">
    <property type="nucleotide sequence ID" value="NC_007577.1"/>
</dbReference>
<dbReference type="SMR" id="Q31B38"/>
<dbReference type="STRING" id="74546.PMT9312_0847"/>
<dbReference type="KEGG" id="pmi:PMT9312_0847"/>
<dbReference type="eggNOG" id="COG0547">
    <property type="taxonomic scope" value="Bacteria"/>
</dbReference>
<dbReference type="HOGENOM" id="CLU_034315_2_1_3"/>
<dbReference type="OrthoDB" id="9806430at2"/>
<dbReference type="UniPathway" id="UPA00035">
    <property type="reaction ID" value="UER00041"/>
</dbReference>
<dbReference type="Proteomes" id="UP000002715">
    <property type="component" value="Chromosome"/>
</dbReference>
<dbReference type="GO" id="GO:0005829">
    <property type="term" value="C:cytosol"/>
    <property type="evidence" value="ECO:0007669"/>
    <property type="project" value="TreeGrafter"/>
</dbReference>
<dbReference type="GO" id="GO:0004048">
    <property type="term" value="F:anthranilate phosphoribosyltransferase activity"/>
    <property type="evidence" value="ECO:0007669"/>
    <property type="project" value="UniProtKB-UniRule"/>
</dbReference>
<dbReference type="GO" id="GO:0000287">
    <property type="term" value="F:magnesium ion binding"/>
    <property type="evidence" value="ECO:0007669"/>
    <property type="project" value="UniProtKB-UniRule"/>
</dbReference>
<dbReference type="GO" id="GO:0000162">
    <property type="term" value="P:L-tryptophan biosynthetic process"/>
    <property type="evidence" value="ECO:0007669"/>
    <property type="project" value="UniProtKB-UniRule"/>
</dbReference>
<dbReference type="FunFam" id="3.40.1030.10:FF:000002">
    <property type="entry name" value="Anthranilate phosphoribosyltransferase"/>
    <property type="match status" value="1"/>
</dbReference>
<dbReference type="Gene3D" id="3.40.1030.10">
    <property type="entry name" value="Nucleoside phosphorylase/phosphoribosyltransferase catalytic domain"/>
    <property type="match status" value="1"/>
</dbReference>
<dbReference type="Gene3D" id="1.20.970.10">
    <property type="entry name" value="Transferase, Pyrimidine Nucleoside Phosphorylase, Chain C"/>
    <property type="match status" value="1"/>
</dbReference>
<dbReference type="HAMAP" id="MF_00211">
    <property type="entry name" value="TrpD"/>
    <property type="match status" value="1"/>
</dbReference>
<dbReference type="InterPro" id="IPR005940">
    <property type="entry name" value="Anthranilate_Pribosyl_Tfrase"/>
</dbReference>
<dbReference type="InterPro" id="IPR000312">
    <property type="entry name" value="Glycosyl_Trfase_fam3"/>
</dbReference>
<dbReference type="InterPro" id="IPR017459">
    <property type="entry name" value="Glycosyl_Trfase_fam3_N_dom"/>
</dbReference>
<dbReference type="InterPro" id="IPR036320">
    <property type="entry name" value="Glycosyl_Trfase_fam3_N_dom_sf"/>
</dbReference>
<dbReference type="InterPro" id="IPR035902">
    <property type="entry name" value="Nuc_phospho_transferase"/>
</dbReference>
<dbReference type="NCBIfam" id="TIGR01245">
    <property type="entry name" value="trpD"/>
    <property type="match status" value="1"/>
</dbReference>
<dbReference type="PANTHER" id="PTHR43285">
    <property type="entry name" value="ANTHRANILATE PHOSPHORIBOSYLTRANSFERASE"/>
    <property type="match status" value="1"/>
</dbReference>
<dbReference type="PANTHER" id="PTHR43285:SF2">
    <property type="entry name" value="ANTHRANILATE PHOSPHORIBOSYLTRANSFERASE"/>
    <property type="match status" value="1"/>
</dbReference>
<dbReference type="Pfam" id="PF02885">
    <property type="entry name" value="Glycos_trans_3N"/>
    <property type="match status" value="1"/>
</dbReference>
<dbReference type="Pfam" id="PF00591">
    <property type="entry name" value="Glycos_transf_3"/>
    <property type="match status" value="1"/>
</dbReference>
<dbReference type="SUPFAM" id="SSF52418">
    <property type="entry name" value="Nucleoside phosphorylase/phosphoribosyltransferase catalytic domain"/>
    <property type="match status" value="1"/>
</dbReference>
<dbReference type="SUPFAM" id="SSF47648">
    <property type="entry name" value="Nucleoside phosphorylase/phosphoribosyltransferase N-terminal domain"/>
    <property type="match status" value="1"/>
</dbReference>
<proteinExistence type="inferred from homology"/>
<sequence>MSFNISNAEILNILLEGGNLDELTSSLLMQRWLNDEISDVQTGAFLSALRAKGCTGVELSSMAEELLKVCELPVARPNLYMVDTCGTGGDGANTFNISTAVAFVAASCGAKIAKHGNKSASGKVGSADVLLNLGLNLNCSLKKVISAVNEIGITFLFAPVWHKSLIKLAPLRKALGIRTVFNQLGPLVNPLRPNAQVLGVASEDLLEPMGSALLKMGMNRVIVVHGSGGLDEASLQGDNKLVFVEKGKLRFSKINILDFNHENIPNDKLVVSGSDSNEEILKSVLNGSGQKSHKDVVALNAALVLWAAGIEDDLHKGFNKALFSINQGNPWEKFLLLKTYLSSDDLISP</sequence>
<name>TRPD_PROM9</name>
<comment type="function">
    <text evidence="1">Catalyzes the transfer of the phosphoribosyl group of 5-phosphorylribose-1-pyrophosphate (PRPP) to anthranilate to yield N-(5'-phosphoribosyl)-anthranilate (PRA).</text>
</comment>
<comment type="catalytic activity">
    <reaction evidence="1">
        <text>N-(5-phospho-beta-D-ribosyl)anthranilate + diphosphate = 5-phospho-alpha-D-ribose 1-diphosphate + anthranilate</text>
        <dbReference type="Rhea" id="RHEA:11768"/>
        <dbReference type="ChEBI" id="CHEBI:16567"/>
        <dbReference type="ChEBI" id="CHEBI:18277"/>
        <dbReference type="ChEBI" id="CHEBI:33019"/>
        <dbReference type="ChEBI" id="CHEBI:58017"/>
        <dbReference type="EC" id="2.4.2.18"/>
    </reaction>
</comment>
<comment type="cofactor">
    <cofactor evidence="1">
        <name>Mg(2+)</name>
        <dbReference type="ChEBI" id="CHEBI:18420"/>
    </cofactor>
    <text evidence="1">Binds 2 magnesium ions per monomer.</text>
</comment>
<comment type="pathway">
    <text evidence="1">Amino-acid biosynthesis; L-tryptophan biosynthesis; L-tryptophan from chorismate: step 2/5.</text>
</comment>
<comment type="subunit">
    <text evidence="1">Homodimer.</text>
</comment>
<comment type="similarity">
    <text evidence="1">Belongs to the anthranilate phosphoribosyltransferase family.</text>
</comment>
<reference key="1">
    <citation type="journal article" date="2006" name="Science">
        <title>Genomic islands and the ecology and evolution of Prochlorococcus.</title>
        <authorList>
            <person name="Coleman M.L."/>
            <person name="Sullivan M.B."/>
            <person name="Martiny A.C."/>
            <person name="Steglich C."/>
            <person name="Barry K."/>
            <person name="Delong E.F."/>
            <person name="Chisholm S.W."/>
        </authorList>
    </citation>
    <scope>NUCLEOTIDE SEQUENCE [LARGE SCALE GENOMIC DNA]</scope>
    <source>
        <strain>MIT 9312</strain>
    </source>
</reference>
<organism>
    <name type="scientific">Prochlorococcus marinus (strain MIT 9312)</name>
    <dbReference type="NCBI Taxonomy" id="74546"/>
    <lineage>
        <taxon>Bacteria</taxon>
        <taxon>Bacillati</taxon>
        <taxon>Cyanobacteriota</taxon>
        <taxon>Cyanophyceae</taxon>
        <taxon>Synechococcales</taxon>
        <taxon>Prochlorococcaceae</taxon>
        <taxon>Prochlorococcus</taxon>
    </lineage>
</organism>